<proteinExistence type="inferred from homology"/>
<comment type="subcellular location">
    <subcellularLocation>
        <location evidence="1">Periplasm</location>
    </subcellularLocation>
</comment>
<comment type="similarity">
    <text evidence="1">Belongs to the UPF0312 family. Type 1 subfamily.</text>
</comment>
<protein>
    <recommendedName>
        <fullName evidence="1">UPF0312 protein PA14_05510</fullName>
    </recommendedName>
</protein>
<gene>
    <name type="ordered locus">PA14_05510</name>
</gene>
<name>Y551_PSEAB</name>
<feature type="signal peptide" evidence="1">
    <location>
        <begin position="1"/>
        <end position="23"/>
    </location>
</feature>
<feature type="chain" id="PRO_1000046823" description="UPF0312 protein PA14_05510">
    <location>
        <begin position="24"/>
        <end position="191"/>
    </location>
</feature>
<evidence type="ECO:0000255" key="1">
    <source>
        <dbReference type="HAMAP-Rule" id="MF_00780"/>
    </source>
</evidence>
<reference key="1">
    <citation type="journal article" date="2006" name="Genome Biol.">
        <title>Genomic analysis reveals that Pseudomonas aeruginosa virulence is combinatorial.</title>
        <authorList>
            <person name="Lee D.G."/>
            <person name="Urbach J.M."/>
            <person name="Wu G."/>
            <person name="Liberati N.T."/>
            <person name="Feinbaum R.L."/>
            <person name="Miyata S."/>
            <person name="Diggins L.T."/>
            <person name="He J."/>
            <person name="Saucier M."/>
            <person name="Deziel E."/>
            <person name="Friedman L."/>
            <person name="Li L."/>
            <person name="Grills G."/>
            <person name="Montgomery K."/>
            <person name="Kucherlapati R."/>
            <person name="Rahme L.G."/>
            <person name="Ausubel F.M."/>
        </authorList>
    </citation>
    <scope>NUCLEOTIDE SEQUENCE [LARGE SCALE GENOMIC DNA]</scope>
    <source>
        <strain>UCBPP-PA14</strain>
    </source>
</reference>
<organism>
    <name type="scientific">Pseudomonas aeruginosa (strain UCBPP-PA14)</name>
    <dbReference type="NCBI Taxonomy" id="208963"/>
    <lineage>
        <taxon>Bacteria</taxon>
        <taxon>Pseudomonadati</taxon>
        <taxon>Pseudomonadota</taxon>
        <taxon>Gammaproteobacteria</taxon>
        <taxon>Pseudomonadales</taxon>
        <taxon>Pseudomonadaceae</taxon>
        <taxon>Pseudomonas</taxon>
    </lineage>
</organism>
<sequence length="191" mass="20776">MLKKTLAALALGSALFTAGQAMAADYKIDKEGQHAFIEFRIKHLGYSWLYGRFNDFDGSFTFDEKNPSADKVKVTINTNSVDTNHAERDKHLRSGDFLNVSKNPTATFESTEVKANGDSADITGNLTLNGVTKPVTIKAKLIGQGDDPWGGYRAGFEGSATLKLKDFGIKMDLGPASQEVELLLSVEGIRQ</sequence>
<dbReference type="EMBL" id="CP000438">
    <property type="protein sequence ID" value="ABJ15390.1"/>
    <property type="molecule type" value="Genomic_DNA"/>
</dbReference>
<dbReference type="RefSeq" id="WP_003084626.1">
    <property type="nucleotide sequence ID" value="NZ_CP034244.1"/>
</dbReference>
<dbReference type="SMR" id="Q02TY9"/>
<dbReference type="KEGG" id="pau:PA14_05510"/>
<dbReference type="PseudoCAP" id="PA14_05510"/>
<dbReference type="HOGENOM" id="CLU_071003_1_2_6"/>
<dbReference type="BioCyc" id="PAER208963:G1G74-459-MONOMER"/>
<dbReference type="Proteomes" id="UP000000653">
    <property type="component" value="Chromosome"/>
</dbReference>
<dbReference type="GO" id="GO:0042597">
    <property type="term" value="C:periplasmic space"/>
    <property type="evidence" value="ECO:0007669"/>
    <property type="project" value="UniProtKB-SubCell"/>
</dbReference>
<dbReference type="FunFam" id="2.40.128.110:FF:000001">
    <property type="entry name" value="UPF0312 protein HMPREF3014_17255"/>
    <property type="match status" value="1"/>
</dbReference>
<dbReference type="Gene3D" id="2.40.128.110">
    <property type="entry name" value="Lipid/polyisoprenoid-binding, YceI-like"/>
    <property type="match status" value="1"/>
</dbReference>
<dbReference type="HAMAP" id="MF_00780">
    <property type="entry name" value="UPF0312"/>
    <property type="match status" value="1"/>
</dbReference>
<dbReference type="InterPro" id="IPR007372">
    <property type="entry name" value="Lipid/polyisoprenoid-bd_YceI"/>
</dbReference>
<dbReference type="InterPro" id="IPR036761">
    <property type="entry name" value="TTHA0802/YceI-like_sf"/>
</dbReference>
<dbReference type="InterPro" id="IPR023480">
    <property type="entry name" value="UPF0312/YceI"/>
</dbReference>
<dbReference type="NCBIfam" id="NF002994">
    <property type="entry name" value="PRK03757.1"/>
    <property type="match status" value="1"/>
</dbReference>
<dbReference type="PANTHER" id="PTHR34406">
    <property type="entry name" value="PROTEIN YCEI"/>
    <property type="match status" value="1"/>
</dbReference>
<dbReference type="PANTHER" id="PTHR34406:SF1">
    <property type="entry name" value="PROTEIN YCEI"/>
    <property type="match status" value="1"/>
</dbReference>
<dbReference type="Pfam" id="PF04264">
    <property type="entry name" value="YceI"/>
    <property type="match status" value="1"/>
</dbReference>
<dbReference type="SMART" id="SM00867">
    <property type="entry name" value="YceI"/>
    <property type="match status" value="1"/>
</dbReference>
<dbReference type="SUPFAM" id="SSF101874">
    <property type="entry name" value="YceI-like"/>
    <property type="match status" value="1"/>
</dbReference>
<accession>Q02TY9</accession>
<keyword id="KW-0574">Periplasm</keyword>
<keyword id="KW-0732">Signal</keyword>